<protein>
    <recommendedName>
        <fullName evidence="2">S-adenosylmethionine decarboxylase proenzyme 2</fullName>
        <shortName evidence="2">AdoMetDC 2</shortName>
        <shortName evidence="2">SAMDC 2</shortName>
        <ecNumber evidence="2">4.1.1.50</ecNumber>
    </recommendedName>
    <component>
        <recommendedName>
            <fullName>S-adenosylmethionine decarboxylase 2 beta chain</fullName>
        </recommendedName>
    </component>
    <component>
        <recommendedName>
            <fullName>S-adenosylmethionine decarboxylase 2 alpha chain</fullName>
        </recommendedName>
    </component>
</protein>
<dbReference type="EC" id="4.1.1.50" evidence="2"/>
<dbReference type="EMBL" id="BA000004">
    <property type="protein sequence ID" value="BAB06867.1"/>
    <property type="molecule type" value="Genomic_DNA"/>
</dbReference>
<dbReference type="PIR" id="D84043">
    <property type="entry name" value="D84043"/>
</dbReference>
<dbReference type="RefSeq" id="WP_010899291.1">
    <property type="nucleotide sequence ID" value="NC_002570.2"/>
</dbReference>
<dbReference type="SMR" id="Q9K859"/>
<dbReference type="STRING" id="272558.gene:10729060"/>
<dbReference type="KEGG" id="bha:BH3148"/>
<dbReference type="eggNOG" id="COG1586">
    <property type="taxonomic scope" value="Bacteria"/>
</dbReference>
<dbReference type="HOGENOM" id="CLU_125470_2_3_9"/>
<dbReference type="OrthoDB" id="9793120at2"/>
<dbReference type="UniPathway" id="UPA00331">
    <property type="reaction ID" value="UER00451"/>
</dbReference>
<dbReference type="Proteomes" id="UP000001258">
    <property type="component" value="Chromosome"/>
</dbReference>
<dbReference type="GO" id="GO:0005829">
    <property type="term" value="C:cytosol"/>
    <property type="evidence" value="ECO:0007669"/>
    <property type="project" value="TreeGrafter"/>
</dbReference>
<dbReference type="GO" id="GO:0004014">
    <property type="term" value="F:adenosylmethionine decarboxylase activity"/>
    <property type="evidence" value="ECO:0007669"/>
    <property type="project" value="UniProtKB-UniRule"/>
</dbReference>
<dbReference type="GO" id="GO:0008295">
    <property type="term" value="P:spermidine biosynthetic process"/>
    <property type="evidence" value="ECO:0007669"/>
    <property type="project" value="UniProtKB-UniRule"/>
</dbReference>
<dbReference type="FunFam" id="3.30.160.750:FF:000001">
    <property type="entry name" value="S-adenosylmethionine decarboxylase proenzyme"/>
    <property type="match status" value="1"/>
</dbReference>
<dbReference type="FunFam" id="3.30.360.110:FF:000001">
    <property type="entry name" value="S-adenosylmethionine decarboxylase proenzyme"/>
    <property type="match status" value="1"/>
</dbReference>
<dbReference type="Gene3D" id="3.30.160.750">
    <property type="match status" value="1"/>
</dbReference>
<dbReference type="Gene3D" id="3.30.360.110">
    <property type="entry name" value="S-adenosylmethionine decarboxylase domain"/>
    <property type="match status" value="1"/>
</dbReference>
<dbReference type="HAMAP" id="MF_00464">
    <property type="entry name" value="AdoMetDC_1"/>
    <property type="match status" value="1"/>
</dbReference>
<dbReference type="InterPro" id="IPR042286">
    <property type="entry name" value="AdoMetDC_C"/>
</dbReference>
<dbReference type="InterPro" id="IPR003826">
    <property type="entry name" value="AdoMetDC_fam_prok"/>
</dbReference>
<dbReference type="InterPro" id="IPR042284">
    <property type="entry name" value="AdoMetDC_N"/>
</dbReference>
<dbReference type="InterPro" id="IPR016067">
    <property type="entry name" value="S-AdoMet_deCO2ase_core"/>
</dbReference>
<dbReference type="InterPro" id="IPR017716">
    <property type="entry name" value="S-AdoMet_deCOase_pro-enz"/>
</dbReference>
<dbReference type="NCBIfam" id="TIGR03330">
    <property type="entry name" value="SAM_DCase_Bsu"/>
    <property type="match status" value="1"/>
</dbReference>
<dbReference type="PANTHER" id="PTHR33866">
    <property type="entry name" value="S-ADENOSYLMETHIONINE DECARBOXYLASE PROENZYME"/>
    <property type="match status" value="1"/>
</dbReference>
<dbReference type="PANTHER" id="PTHR33866:SF2">
    <property type="entry name" value="S-ADENOSYLMETHIONINE DECARBOXYLASE PROENZYME"/>
    <property type="match status" value="1"/>
</dbReference>
<dbReference type="Pfam" id="PF02675">
    <property type="entry name" value="AdoMet_dc"/>
    <property type="match status" value="1"/>
</dbReference>
<dbReference type="SUPFAM" id="SSF56276">
    <property type="entry name" value="S-adenosylmethionine decarboxylase"/>
    <property type="match status" value="1"/>
</dbReference>
<organism>
    <name type="scientific">Halalkalibacterium halodurans (strain ATCC BAA-125 / DSM 18197 / FERM 7344 / JCM 9153 / C-125)</name>
    <name type="common">Bacillus halodurans</name>
    <dbReference type="NCBI Taxonomy" id="272558"/>
    <lineage>
        <taxon>Bacteria</taxon>
        <taxon>Bacillati</taxon>
        <taxon>Bacillota</taxon>
        <taxon>Bacilli</taxon>
        <taxon>Bacillales</taxon>
        <taxon>Bacillaceae</taxon>
        <taxon>Halalkalibacterium (ex Joshi et al. 2022)</taxon>
    </lineage>
</organism>
<evidence type="ECO:0000250" key="1"/>
<evidence type="ECO:0000255" key="2">
    <source>
        <dbReference type="HAMAP-Rule" id="MF_00464"/>
    </source>
</evidence>
<feature type="chain" id="PRO_0000030095" description="S-adenosylmethionine decarboxylase 2 beta chain" evidence="1">
    <location>
        <begin position="1"/>
        <end position="62"/>
    </location>
</feature>
<feature type="chain" id="PRO_0000030096" description="S-adenosylmethionine decarboxylase 2 alpha chain" evidence="1">
    <location>
        <begin position="63"/>
        <end position="127"/>
    </location>
</feature>
<feature type="active site" description="Schiff-base intermediate with substrate; via pyruvic acid" evidence="2">
    <location>
        <position position="63"/>
    </location>
</feature>
<feature type="active site" description="Proton acceptor; for processing activity" evidence="2">
    <location>
        <position position="68"/>
    </location>
</feature>
<feature type="active site" description="Proton donor; for catalytic activity" evidence="2">
    <location>
        <position position="83"/>
    </location>
</feature>
<feature type="site" description="Cleavage (non-hydrolytic); by autolysis" evidence="2">
    <location>
        <begin position="62"/>
        <end position="63"/>
    </location>
</feature>
<feature type="modified residue" description="Pyruvic acid (Ser); by autocatalysis" evidence="2">
    <location>
        <position position="63"/>
    </location>
</feature>
<keyword id="KW-0068">Autocatalytic cleavage</keyword>
<keyword id="KW-0210">Decarboxylase</keyword>
<keyword id="KW-0456">Lyase</keyword>
<keyword id="KW-0620">Polyamine biosynthesis</keyword>
<keyword id="KW-0670">Pyruvate</keyword>
<keyword id="KW-1185">Reference proteome</keyword>
<keyword id="KW-0949">S-adenosyl-L-methionine</keyword>
<keyword id="KW-0704">Schiff base</keyword>
<keyword id="KW-0745">Spermidine biosynthesis</keyword>
<keyword id="KW-0865">Zymogen</keyword>
<proteinExistence type="inferred from homology"/>
<sequence length="127" mass="13849">MDTMGRHVIAELWGCDVDKLNDLSFIEQVFVDAALKAGAEVREVAFHKFAPQGISGVVIISESHLTIHSFPEHGYASIDVYTCGDRIDPNVASNYIAEALKATATEVVELPRGMGPIQLEKPKVKVL</sequence>
<name>SPEH2_HALH5</name>
<gene>
    <name evidence="2" type="primary">speH2</name>
    <name type="ordered locus">BH3148</name>
</gene>
<comment type="function">
    <text evidence="2">Catalyzes the decarboxylation of S-adenosylmethionine to S-adenosylmethioninamine (dcAdoMet), the propylamine donor required for the synthesis of the polyamines spermine and spermidine from the diamine putrescine.</text>
</comment>
<comment type="catalytic activity">
    <reaction evidence="2">
        <text>S-adenosyl-L-methionine + H(+) = S-adenosyl 3-(methylsulfanyl)propylamine + CO2</text>
        <dbReference type="Rhea" id="RHEA:15981"/>
        <dbReference type="ChEBI" id="CHEBI:15378"/>
        <dbReference type="ChEBI" id="CHEBI:16526"/>
        <dbReference type="ChEBI" id="CHEBI:57443"/>
        <dbReference type="ChEBI" id="CHEBI:59789"/>
        <dbReference type="EC" id="4.1.1.50"/>
    </reaction>
</comment>
<comment type="cofactor">
    <cofactor evidence="2">
        <name>pyruvate</name>
        <dbReference type="ChEBI" id="CHEBI:15361"/>
    </cofactor>
    <text evidence="2">Binds 1 pyruvoyl group covalently per subunit.</text>
</comment>
<comment type="pathway">
    <text evidence="2">Amine and polyamine biosynthesis; S-adenosylmethioninamine biosynthesis; S-adenosylmethioninamine from S-adenosyl-L-methionine: step 1/1.</text>
</comment>
<comment type="subunit">
    <text evidence="2">Heterotetramer of two alpha and two beta chains arranged as a dimer of alpha/beta heterodimers.</text>
</comment>
<comment type="PTM">
    <text evidence="2">Is synthesized initially as an inactive proenzyme. Formation of the active enzyme involves a self-maturation process in which the active site pyruvoyl group is generated from an internal serine residue via an autocatalytic post-translational modification. Two non-identical subunits are generated from the proenzyme in this reaction, and the pyruvate is formed at the N-terminus of the alpha chain, which is derived from the carboxyl end of the proenzyme. The post-translation cleavage follows an unusual pathway, termed non-hydrolytic serinolysis, in which the side chain hydroxyl group of the serine supplies its oxygen atom to form the C-terminus of the beta chain, while the remainder of the serine residue undergoes an oxidative deamination to produce ammonia and the pyruvoyl group blocking the N-terminus of the alpha chain.</text>
</comment>
<comment type="similarity">
    <text evidence="2">Belongs to the prokaryotic AdoMetDC family. Type 1 subfamily.</text>
</comment>
<reference key="1">
    <citation type="journal article" date="2000" name="Nucleic Acids Res.">
        <title>Complete genome sequence of the alkaliphilic bacterium Bacillus halodurans and genomic sequence comparison with Bacillus subtilis.</title>
        <authorList>
            <person name="Takami H."/>
            <person name="Nakasone K."/>
            <person name="Takaki Y."/>
            <person name="Maeno G."/>
            <person name="Sasaki R."/>
            <person name="Masui N."/>
            <person name="Fuji F."/>
            <person name="Hirama C."/>
            <person name="Nakamura Y."/>
            <person name="Ogasawara N."/>
            <person name="Kuhara S."/>
            <person name="Horikoshi K."/>
        </authorList>
    </citation>
    <scope>NUCLEOTIDE SEQUENCE [LARGE SCALE GENOMIC DNA]</scope>
    <source>
        <strain>ATCC BAA-125 / DSM 18197 / FERM 7344 / JCM 9153 / C-125</strain>
    </source>
</reference>
<accession>Q9K859</accession>